<feature type="chain" id="PRO_0000462445" description="Polycyclic ketone monooxygenase">
    <location>
        <begin position="1"/>
        <end position="655"/>
    </location>
</feature>
<feature type="binding site" evidence="4">
    <location>
        <position position="89"/>
    </location>
    <ligand>
        <name>FAD</name>
        <dbReference type="ChEBI" id="CHEBI:57692"/>
    </ligand>
</feature>
<feature type="binding site" evidence="4">
    <location>
        <position position="113"/>
    </location>
    <ligand>
        <name>FAD</name>
        <dbReference type="ChEBI" id="CHEBI:57692"/>
    </ligand>
</feature>
<feature type="binding site" evidence="4">
    <location>
        <position position="114"/>
    </location>
    <ligand>
        <name>FAD</name>
        <dbReference type="ChEBI" id="CHEBI:57692"/>
    </ligand>
</feature>
<feature type="binding site" evidence="4">
    <location>
        <position position="121"/>
    </location>
    <ligand>
        <name>FAD</name>
        <dbReference type="ChEBI" id="CHEBI:57692"/>
    </ligand>
</feature>
<feature type="binding site" evidence="4">
    <location>
        <position position="124"/>
    </location>
    <ligand>
        <name>FAD</name>
        <dbReference type="ChEBI" id="CHEBI:57692"/>
    </ligand>
</feature>
<feature type="binding site" evidence="4">
    <location>
        <position position="132"/>
    </location>
    <ligand>
        <name>FAD</name>
        <dbReference type="ChEBI" id="CHEBI:57692"/>
    </ligand>
</feature>
<feature type="binding site" evidence="4">
    <location>
        <position position="133"/>
    </location>
    <ligand>
        <name>FAD</name>
        <dbReference type="ChEBI" id="CHEBI:57692"/>
    </ligand>
</feature>
<feature type="binding site" evidence="4">
    <location>
        <position position="139"/>
    </location>
    <ligand>
        <name>FAD</name>
        <dbReference type="ChEBI" id="CHEBI:57692"/>
    </ligand>
</feature>
<feature type="binding site" evidence="4">
    <location>
        <position position="183"/>
    </location>
    <ligand>
        <name>FAD</name>
        <dbReference type="ChEBI" id="CHEBI:57692"/>
    </ligand>
</feature>
<feature type="binding site" evidence="4">
    <location>
        <position position="277"/>
    </location>
    <ligand>
        <name>NADPH</name>
        <dbReference type="ChEBI" id="CHEBI:57783"/>
    </ligand>
</feature>
<feature type="binding site" evidence="4">
    <location>
        <position position="280"/>
    </location>
    <ligand>
        <name>NADPH</name>
        <dbReference type="ChEBI" id="CHEBI:57783"/>
    </ligand>
</feature>
<feature type="binding site" evidence="4">
    <location>
        <position position="301"/>
    </location>
    <ligand>
        <name>NADPH</name>
        <dbReference type="ChEBI" id="CHEBI:57783"/>
    </ligand>
</feature>
<feature type="binding site" evidence="4">
    <location>
        <position position="425"/>
    </location>
    <ligand>
        <name>NADPH</name>
        <dbReference type="ChEBI" id="CHEBI:57783"/>
    </ligand>
</feature>
<feature type="binding site" evidence="4">
    <location>
        <position position="452"/>
    </location>
    <ligand>
        <name>NADPH</name>
        <dbReference type="ChEBI" id="CHEBI:57783"/>
    </ligand>
</feature>
<feature type="binding site" evidence="4">
    <location>
        <position position="492"/>
    </location>
    <ligand>
        <name>FAD</name>
        <dbReference type="ChEBI" id="CHEBI:57692"/>
    </ligand>
</feature>
<feature type="binding site" evidence="4">
    <location>
        <position position="541"/>
    </location>
    <ligand>
        <name>FAD</name>
        <dbReference type="ChEBI" id="CHEBI:57692"/>
    </ligand>
</feature>
<feature type="binding site" evidence="4">
    <location>
        <position position="600"/>
    </location>
    <ligand>
        <name>NADPH</name>
        <dbReference type="ChEBI" id="CHEBI:57783"/>
    </ligand>
</feature>
<feature type="disulfide bond" evidence="4">
    <location>
        <begin position="424"/>
        <end position="596"/>
    </location>
</feature>
<sequence length="655" mass="72139">MAPSAEGASGAPTPEDLKLHQLSQKYTAEAAKRFRPEGLGQFIRLKEVGNERFRALAEDPWVDHAALNAKEPVKDGSRYKFIILGAGYGGLLYAVRLAEAGLASGPDDILMVDAAGGFGGTWWWNRYPGLHCDVESYSYMPLLEETGYIPKSKYAAGPELLEHAYRIATQWKLHDKALFRSNVKTIRWDDESRLWSLEVTEGRGPGQQSRELKLQARYVLLASGILTNPQVPKIPGLETFTGPVFHTARWNYDVTGGSPTDEALNRLEGKRVGIIGTGATAIQVVPKLAKYAKELYVFQRTPSGVWWRGQRPTDPVEWKTKIARKKGWQRERMLNLDSYLTDAAEEGQENMVADGWTEMPAFSAVIGSPRHGIVEPTPEKIAEHLGRLYKLDLPHAEQVRARTDSIVKDPKTAAKLKAWYPTWCKRPTFSDEYLQTFNLPNVHLVDTDGKGVDAANPSGLVVADKEYPLDILVLSTGYVTPSIGGGSPAVRTGVDIYGRGGKSLDDKWQTHGAATLHGVCSNGFPNLFFTPLSQSSQAANNAFTLDVGTEHIVQVIKTAEDRVDGDALVEVTSEAEEAWSFEIMKHAGWFASVTGCTPGYITSEGEALRKSEDPMEMAKRARSGNLSQGMASYMKLLQEYRADGSLKGFDISSRA</sequence>
<organism>
    <name type="scientific">Thermothelomyces thermophilus (strain ATCC 42464 / BCRC 31852 / DSM 1799)</name>
    <name type="common">Sporotrichum thermophile</name>
    <dbReference type="NCBI Taxonomy" id="573729"/>
    <lineage>
        <taxon>Eukaryota</taxon>
        <taxon>Fungi</taxon>
        <taxon>Dikarya</taxon>
        <taxon>Ascomycota</taxon>
        <taxon>Pezizomycotina</taxon>
        <taxon>Sordariomycetes</taxon>
        <taxon>Sordariomycetidae</taxon>
        <taxon>Sordariales</taxon>
        <taxon>Chaetomiaceae</taxon>
        <taxon>Thermothelomyces</taxon>
    </lineage>
</organism>
<comment type="function">
    <text evidence="1">Polycyclic ketone monooxygenase (PockeMO) that displays excellent enantioselectivity, acts on various ketones, and is particularly active on polycyclic molecules (PubMed:28010060). Breaks C-C bonds through the insertion of a single oxygen atom adjacent to a carbonyl moiety, yielding esters or lactones from ketones (PubMed:28010060). PockeMO is able to convert linear ketones (including cyclohexane and to a lesser extend 4-octanone), cyclic ketones (including cyclohexanone and cyclooctanone), bicyclic ketones and polycyclic ketones (steroids) (PubMed:28010060). Performs oxidation of the keto functionalities at both the A and D rings of steroids (PubMed:28010060). Particularly, oxidizes the A ring of stanolone or pregnenolone (PubMed:28010060). Selectively oxidizes the D ring of androstenedione or androstadienedione, steroids with keto groups in both the A and D rings, to yield the pharmaceutically relevant testo(lo)lactone (PubMed:28010060).</text>
</comment>
<comment type="cofactor">
    <cofactor evidence="1">
        <name>FAD</name>
        <dbReference type="ChEBI" id="CHEBI:57692"/>
    </cofactor>
</comment>
<comment type="biophysicochemical properties">
    <kinetics>
        <KM evidence="1">144 uM for cyclododecanone</KM>
        <KM evidence="1">0.4 mM for bicyclic ketone 13</KM>
    </kinetics>
    <phDependence>
        <text evidence="1">Optimum pH is 6.5 to 9.0.</text>
    </phDependence>
    <temperatureDependence>
        <text evidence="1">Optimum temperature is 50 degrees Celsius.</text>
    </temperatureDependence>
</comment>
<comment type="biotechnology">
    <text evidence="1">The polycyclic ketone monooxygenase accepts bulky and complex substrates and converts them with high efficiency, making it a promising candidate for application as an industrial biocatalyst.</text>
</comment>
<comment type="similarity">
    <text evidence="3">Belongs to the FAD-binding monooxygenase family.</text>
</comment>
<name>BVMO_THET4</name>
<protein>
    <recommendedName>
        <fullName evidence="2">Polycyclic ketone monooxygenase</fullName>
        <shortName evidence="2">PockeMO</shortName>
        <ecNumber evidence="1">1.14.13.-</ecNumber>
    </recommendedName>
    <alternativeName>
        <fullName evidence="2">Baeyer-Villiger monooxygenase</fullName>
        <shortName evidence="2">BVMO</shortName>
    </alternativeName>
</protein>
<proteinExistence type="evidence at protein level"/>
<dbReference type="EC" id="1.14.13.-" evidence="1"/>
<dbReference type="EMBL" id="CP003003">
    <property type="protein sequence ID" value="AEO56645.1"/>
    <property type="molecule type" value="Genomic_DNA"/>
</dbReference>
<dbReference type="RefSeq" id="XP_003661890.1">
    <property type="nucleotide sequence ID" value="XM_003661842.1"/>
</dbReference>
<dbReference type="PDB" id="5MQ6">
    <property type="method" value="X-ray"/>
    <property type="resolution" value="2.00 A"/>
    <property type="chains" value="A=1-655"/>
</dbReference>
<dbReference type="PDBsum" id="5MQ6"/>
<dbReference type="SMR" id="G2QA95"/>
<dbReference type="GeneID" id="11510695"/>
<dbReference type="KEGG" id="mtm:MYCTH_65400"/>
<dbReference type="VEuPathDB" id="FungiDB:MYCTH_65400"/>
<dbReference type="eggNOG" id="KOG1399">
    <property type="taxonomic scope" value="Eukaryota"/>
</dbReference>
<dbReference type="HOGENOM" id="CLU_006937_8_2_1"/>
<dbReference type="InParanoid" id="G2QA95"/>
<dbReference type="OMA" id="PWYPTWC"/>
<dbReference type="OrthoDB" id="66881at2759"/>
<dbReference type="Proteomes" id="UP000007322">
    <property type="component" value="Chromosome 2"/>
</dbReference>
<dbReference type="GO" id="GO:0000166">
    <property type="term" value="F:nucleotide binding"/>
    <property type="evidence" value="ECO:0007669"/>
    <property type="project" value="UniProtKB-KW"/>
</dbReference>
<dbReference type="GO" id="GO:0016491">
    <property type="term" value="F:oxidoreductase activity"/>
    <property type="evidence" value="ECO:0007669"/>
    <property type="project" value="UniProtKB-KW"/>
</dbReference>
<dbReference type="Gene3D" id="3.50.50.60">
    <property type="entry name" value="FAD/NAD(P)-binding domain"/>
    <property type="match status" value="2"/>
</dbReference>
<dbReference type="InterPro" id="IPR050775">
    <property type="entry name" value="FAD-binding_Monooxygenases"/>
</dbReference>
<dbReference type="InterPro" id="IPR036188">
    <property type="entry name" value="FAD/NAD-bd_sf"/>
</dbReference>
<dbReference type="InterPro" id="IPR023753">
    <property type="entry name" value="FAD/NAD-binding_dom"/>
</dbReference>
<dbReference type="PANTHER" id="PTHR43098:SF2">
    <property type="entry name" value="FAD-BINDING MONOOXYGENASE AUSB-RELATED"/>
    <property type="match status" value="1"/>
</dbReference>
<dbReference type="PANTHER" id="PTHR43098">
    <property type="entry name" value="L-ORNITHINE N(5)-MONOOXYGENASE-RELATED"/>
    <property type="match status" value="1"/>
</dbReference>
<dbReference type="Pfam" id="PF07992">
    <property type="entry name" value="Pyr_redox_2"/>
    <property type="match status" value="1"/>
</dbReference>
<dbReference type="PRINTS" id="PR00411">
    <property type="entry name" value="PNDRDTASEI"/>
</dbReference>
<dbReference type="SUPFAM" id="SSF51905">
    <property type="entry name" value="FAD/NAD(P)-binding domain"/>
    <property type="match status" value="2"/>
</dbReference>
<reference key="1">
    <citation type="journal article" date="2011" name="Nat. Biotechnol.">
        <title>Comparative genomic analysis of the thermophilic biomass-degrading fungi Myceliophthora thermophila and Thielavia terrestris.</title>
        <authorList>
            <person name="Berka R.M."/>
            <person name="Grigoriev I.V."/>
            <person name="Otillar R."/>
            <person name="Salamov A."/>
            <person name="Grimwood J."/>
            <person name="Reid I."/>
            <person name="Ishmael N."/>
            <person name="John T."/>
            <person name="Darmond C."/>
            <person name="Moisan M.-C."/>
            <person name="Henrissat B."/>
            <person name="Coutinho P.M."/>
            <person name="Lombard V."/>
            <person name="Natvig D.O."/>
            <person name="Lindquist E."/>
            <person name="Schmutz J."/>
            <person name="Lucas S."/>
            <person name="Harris P."/>
            <person name="Powlowski J."/>
            <person name="Bellemare A."/>
            <person name="Taylor D."/>
            <person name="Butler G."/>
            <person name="de Vries R.P."/>
            <person name="Allijn I.E."/>
            <person name="van den Brink J."/>
            <person name="Ushinsky S."/>
            <person name="Storms R."/>
            <person name="Powell A.J."/>
            <person name="Paulsen I.T."/>
            <person name="Elbourne L.D.H."/>
            <person name="Baker S.E."/>
            <person name="Magnuson J."/>
            <person name="LaBoissiere S."/>
            <person name="Clutterbuck A.J."/>
            <person name="Martinez D."/>
            <person name="Wogulis M."/>
            <person name="de Leon A.L."/>
            <person name="Rey M.W."/>
            <person name="Tsang A."/>
        </authorList>
    </citation>
    <scope>NUCLEOTIDE SEQUENCE [LARGE SCALE GENOMIC DNA]</scope>
    <source>
        <strain>ATCC 42464 / BCRC 31852 / DSM 1799</strain>
    </source>
</reference>
<reference evidence="4" key="2">
    <citation type="journal article" date="2017" name="J. Am. Chem. Soc.">
        <title>Polycyclic Ketone Monooxygenase from the Thermophilic Fungus Thermothelomyces thermophila: A Structurally Distinct Biocatalyst for Bulky Substrates.</title>
        <authorList>
            <person name="Furst M.J."/>
            <person name="Savino S."/>
            <person name="Dudek H.M."/>
            <person name="Gomez Castellanos J.R."/>
            <person name="Gutierrez de Souza C."/>
            <person name="Rovida S."/>
            <person name="Fraaije M.W."/>
            <person name="Mattevi A."/>
        </authorList>
    </citation>
    <scope>X-RAY CRYSTALLOGRAPHY (2.00 ANGSTROMS) IN COMPLEX WITH FAD AND NADPH</scope>
    <scope>DISULFIDE BONDS</scope>
    <scope>COFACTOR</scope>
    <scope>FUNCTION</scope>
    <scope>CATALYTIC ACTIVITY</scope>
    <scope>SUBSTRATE SPECIFICITY</scope>
    <scope>BIOPHYSICOCHEMICAL PROPERTIES</scope>
    <scope>BIOTECHNOLOGY</scope>
</reference>
<accession>G2QA95</accession>
<gene>
    <name type="ORF">MYCTH_65400</name>
</gene>
<keyword id="KW-0002">3D-structure</keyword>
<keyword id="KW-1015">Disulfide bond</keyword>
<keyword id="KW-0274">FAD</keyword>
<keyword id="KW-0285">Flavoprotein</keyword>
<keyword id="KW-0521">NADP</keyword>
<keyword id="KW-0547">Nucleotide-binding</keyword>
<keyword id="KW-0560">Oxidoreductase</keyword>
<keyword id="KW-1185">Reference proteome</keyword>
<evidence type="ECO:0000269" key="1">
    <source>
    </source>
</evidence>
<evidence type="ECO:0000303" key="2">
    <source>
    </source>
</evidence>
<evidence type="ECO:0000305" key="3"/>
<evidence type="ECO:0007744" key="4">
    <source>
        <dbReference type="PDB" id="5MQ6"/>
    </source>
</evidence>